<gene>
    <name evidence="19" type="primary">6-hdno</name>
</gene>
<name>HDNO_PAENI</name>
<protein>
    <recommendedName>
        <fullName evidence="15">(R)-6-hydroxynicotine oxidase</fullName>
        <ecNumber evidence="5 6 8 9 11">1.5.3.6</ecNumber>
    </recommendedName>
    <alternativeName>
        <fullName evidence="13">6-hydroxy-D-nicotine oxidase</fullName>
        <shortName evidence="13">6-HDNO</shortName>
    </alternativeName>
    <alternativeName>
        <fullName evidence="14">D-6-hydroxynicotine oxidase</fullName>
        <shortName evidence="12">DHNO</shortName>
    </alternativeName>
</protein>
<proteinExistence type="evidence at protein level"/>
<reference key="1">
    <citation type="journal article" date="1987" name="Eur. J. Biochem.">
        <title>6-hydroxy-D-nicotine oxidase of Arthrobacter oxidans. Gene structure of the flavoenzyme and its relationship to 6-hydroxy-L-nicotine oxidase.</title>
        <authorList>
            <person name="Brandsch R."/>
            <person name="Hinkkanen A.E."/>
            <person name="Mauch L."/>
            <person name="Nagursky H."/>
            <person name="Decker K."/>
        </authorList>
    </citation>
    <scope>NUCLEOTIDE SEQUENCE [GENOMIC DNA]</scope>
</reference>
<reference key="2">
    <citation type="submission" date="1990-09" db="EMBL/GenBank/DDBJ databases">
        <authorList>
            <person name="Brandsch R."/>
        </authorList>
    </citation>
    <scope>SEQUENCE REVISION</scope>
</reference>
<reference key="3">
    <citation type="journal article" date="2003" name="J. Bacteriol.">
        <title>Sequence of the 165-kilobase catabolic plasmid pAO1 from Arthrobacter nicotinovorans and identification of a pAO1-dependent nicotine uptake system.</title>
        <authorList>
            <person name="Igloi G.L."/>
            <person name="Brandsch R."/>
        </authorList>
    </citation>
    <scope>NUCLEOTIDE SEQUENCE [LARGE SCALE GENOMIC DNA]</scope>
    <source>
        <strain>ATCC 49919 / DSM 420 / JCM 3874 / KCTC 9902 / LMG 16253 / NBRC 15511</strain>
        <plasmid>pAO1</plasmid>
    </source>
</reference>
<reference key="4">
    <citation type="journal article" date="1965" name="Biochim. Biophys. Acta">
        <title>Induction and purification of stereospecific nicotine oxidizing enzymes from Arthrobacter oxidans.</title>
        <authorList>
            <person name="Decker K."/>
            <person name="Bleeg H."/>
        </authorList>
    </citation>
    <scope>FUNCTION</scope>
    <scope>CATALYTIC ACTIVITY</scope>
    <scope>ACTIVITY REGULATION</scope>
    <scope>BIOPHYSICOCHEMICAL PROPERTIES</scope>
    <scope>PATHWAY</scope>
    <scope>INDUCTION</scope>
</reference>
<reference key="5">
    <citation type="journal article" date="1967" name="Eur. J. Biochem.">
        <title>Mechanism and specificity of L- and D-6-hydroxynicotine oxidase.</title>
        <authorList>
            <person name="Decker K."/>
            <person name="Dai V.D."/>
        </authorList>
    </citation>
    <scope>FUNCTION</scope>
    <scope>CATALYTIC ACTIVITY</scope>
    <scope>ACTIVITY REGULATION</scope>
</reference>
<reference key="6">
    <citation type="journal article" date="1972" name="Eur. J. Biochem.">
        <title>Covalently bound flavin in D-6-hydroxynicotine oxidase from Arthrobacter oxidans. Purification and properties of D-6-hydroxynicotine oxidase.</title>
        <authorList>
            <person name="Bruehmueller M."/>
            <person name="Moehler H."/>
            <person name="Decker K."/>
        </authorList>
    </citation>
    <scope>FUNCTION</scope>
    <scope>CATALYTIC ACTIVITY</scope>
    <scope>COFACTOR</scope>
    <scope>ACTIVITY REGULATION</scope>
    <scope>BIOPHYSICOCHEMICAL PROPERTIES</scope>
    <scope>SUBUNIT</scope>
</reference>
<reference key="7">
    <citation type="journal article" date="1972" name="Eur. J. Biochem.">
        <title>Covalently bound flavin in D-6-hydroxynicotine oxidase from Arthrobacter oxidans. Identification of the 8-(N-3-histidyl)-riboflavin-linkage between FAD and apoenzyme.</title>
        <authorList>
            <person name="Moehler H."/>
            <person name="Bruehmueller M."/>
            <person name="Decker K."/>
        </authorList>
    </citation>
    <scope>COFACTOR</scope>
</reference>
<reference key="8">
    <citation type="journal article" date="1985" name="J. Bacteriol.">
        <title>Localization of the enantiozymes of 6-hydroxy-nicotine oxidase in Arthrobacter oxidans by electron immunochemistry.</title>
        <authorList>
            <person name="Swafford J.R."/>
            <person name="Reeves H.C."/>
            <person name="Brandsch R."/>
        </authorList>
    </citation>
    <scope>SUBCELLULAR LOCATION</scope>
    <scope>INDUCTION</scope>
</reference>
<reference key="9">
    <citation type="journal article" date="1989" name="FEBS Lett.">
        <title>Site-directed mutagenesis of the FAD-binding histidine of 6-hydroxy-D-nicotine oxidase. Consequences on flavinylation and enzyme activity.</title>
        <authorList>
            <person name="Mauch L."/>
            <person name="Bichler V."/>
            <person name="Brandsch R."/>
        </authorList>
    </citation>
    <scope>CATALYTIC ACTIVITY</scope>
    <scope>COFACTOR</scope>
    <scope>FLAVIN BINDING AT HIS-71</scope>
    <scope>MUTAGENESIS OF HIS-71</scope>
</reference>
<reference key="10">
    <citation type="journal article" date="1990" name="J. Biol. Chem.">
        <title>Lysine can replace arginine 67 in the mediation of covalent attachment of FAD to histidine 71 of 6-hydroxy-D-nicotine oxidase.</title>
        <authorList>
            <person name="Mauch L."/>
            <person name="Bichler V."/>
            <person name="Brandsch R."/>
        </authorList>
    </citation>
    <scope>COFACTOR</scope>
    <scope>FLAVIN BINDING AT HIS-71</scope>
    <scope>MUTAGENESIS OF ARG-67 AND SER-68</scope>
</reference>
<reference key="11">
    <citation type="journal article" date="2003" name="J. Biol. Chem.">
        <title>Characterization of HdnoR, the transcriptional repressor of the 6-hydroxy-D-nicotine oxidase gene of Arthrobacter nicotinovorans pAO1, and its DNA-binding activity in response to L- and D-nicotine derivatives.</title>
        <authorList>
            <person name="Sandu C."/>
            <person name="Chiribau C.B."/>
            <person name="Brandsch R."/>
        </authorList>
    </citation>
    <scope>TRANSCRIPTIONAL REGULATION</scope>
    <source>
        <strain>ATCC 49919 / DSM 420 / JCM 3874 / KCTC 9902 / LMG 16253 / NBRC 15511</strain>
        <plasmid>pAO1</plasmid>
    </source>
</reference>
<reference key="12">
    <citation type="journal article" date="2019" name="Biochemistry">
        <title>Mechanism of the flavoprotein D-6-hydroxynicotine oxidase: substrate specificity, pH and solvent isotope effects, and roles of key active-site residues.</title>
        <authorList>
            <person name="Fitzpatrick P.F."/>
            <person name="Dougherty V."/>
            <person name="Subedi B."/>
            <person name="Quilantan J."/>
            <person name="Hinck C.S."/>
            <person name="Lujan A.I."/>
            <person name="Tormos J.R."/>
        </authorList>
    </citation>
    <scope>FUNCTION</scope>
    <scope>CATALYTIC ACTIVITY</scope>
    <scope>REACTION MECHANISM</scope>
    <scope>MUTAGENESIS OF LYS-347; GLU-349 AND GLU-351</scope>
</reference>
<reference evidence="20 21 22" key="13">
    <citation type="journal article" date="2005" name="J. Mol. Biol.">
        <title>Crystal structure of 6-hydroxy-D-nicotine oxidase from Arthrobacter nicotinovorans.</title>
        <authorList>
            <person name="Koetter J.W."/>
            <person name="Schulz G.E."/>
        </authorList>
    </citation>
    <scope>X-RAY CRYSTALLOGRAPHY (1.92 ANGSTROMS) OF SER-433 MUTANT IN COMPLEXES WITH FAD</scope>
    <scope>COFACTOR</scope>
    <scope>FLAVIN BINDING AT HIS-71</scope>
    <scope>SUBUNIT</scope>
</reference>
<keyword id="KW-0002">3D-structure</keyword>
<keyword id="KW-0017">Alkaloid metabolism</keyword>
<keyword id="KW-0963">Cytoplasm</keyword>
<keyword id="KW-0274">FAD</keyword>
<keyword id="KW-0285">Flavoprotein</keyword>
<keyword id="KW-0547">Nucleotide-binding</keyword>
<keyword id="KW-0560">Oxidoreductase</keyword>
<keyword id="KW-0614">Plasmid</keyword>
<organism>
    <name type="scientific">Paenarthrobacter nicotinovorans</name>
    <name type="common">Arthrobacter nicotinovorans</name>
    <dbReference type="NCBI Taxonomy" id="29320"/>
    <lineage>
        <taxon>Bacteria</taxon>
        <taxon>Bacillati</taxon>
        <taxon>Actinomycetota</taxon>
        <taxon>Actinomycetes</taxon>
        <taxon>Micrococcales</taxon>
        <taxon>Micrococcaceae</taxon>
        <taxon>Paenarthrobacter</taxon>
    </lineage>
</organism>
<feature type="chain" id="PRO_0000128157" description="(R)-6-hydroxynicotine oxidase">
    <location>
        <begin position="1"/>
        <end position="458"/>
    </location>
</feature>
<feature type="domain" description="FAD-binding PCMH-type" evidence="1">
    <location>
        <begin position="33"/>
        <end position="204"/>
    </location>
</feature>
<feature type="binding site" evidence="3 20 21 22">
    <location>
        <begin position="67"/>
        <end position="73"/>
    </location>
    <ligand>
        <name>FAD</name>
        <dbReference type="ChEBI" id="CHEBI:57692"/>
    </ligand>
</feature>
<feature type="binding site" evidence="3 20 21 22">
    <location>
        <begin position="129"/>
        <end position="130"/>
    </location>
    <ligand>
        <name>FAD</name>
        <dbReference type="ChEBI" id="CHEBI:57692"/>
    </ligand>
</feature>
<feature type="binding site" evidence="3 20 21 22">
    <location>
        <begin position="134"/>
        <end position="137"/>
    </location>
    <ligand>
        <name>FAD</name>
        <dbReference type="ChEBI" id="CHEBI:57692"/>
    </ligand>
</feature>
<feature type="binding site" evidence="3 20 21 22">
    <location>
        <position position="144"/>
    </location>
    <ligand>
        <name>FAD</name>
        <dbReference type="ChEBI" id="CHEBI:57692"/>
    </ligand>
</feature>
<feature type="binding site" evidence="3 20 21 22">
    <location>
        <position position="195"/>
    </location>
    <ligand>
        <name>FAD</name>
        <dbReference type="ChEBI" id="CHEBI:57692"/>
    </ligand>
</feature>
<feature type="binding site" evidence="3 20 21 22">
    <location>
        <position position="413"/>
    </location>
    <ligand>
        <name>FAD</name>
        <dbReference type="ChEBI" id="CHEBI:57692"/>
    </ligand>
</feature>
<feature type="binding site" evidence="3 20 21 22">
    <location>
        <position position="450"/>
    </location>
    <ligand>
        <name>FAD</name>
        <dbReference type="ChEBI" id="CHEBI:57692"/>
    </ligand>
</feature>
<feature type="modified residue" description="Pros-8alpha-FAD histidine" evidence="3 4 5">
    <location>
        <position position="71"/>
    </location>
</feature>
<feature type="mutagenesis site" description="No FAD incorporation." evidence="4">
    <original>R</original>
    <variation>A</variation>
    <location>
        <position position="67"/>
    </location>
</feature>
<feature type="mutagenesis site" description="No effect on FAD incorporation, but reduces activity." evidence="4">
    <original>R</original>
    <variation>K</variation>
    <location>
        <position position="67"/>
    </location>
</feature>
<feature type="mutagenesis site" description="No effect on FAD incorporation or on activity." evidence="4">
    <original>S</original>
    <variation>A</variation>
    <location>
        <position position="68"/>
    </location>
</feature>
<feature type="mutagenesis site" description="No FAD incorporation, abolishes or diminishes significantly the activity." evidence="5">
    <original>H</original>
    <variation>C</variation>
    <variation>Y</variation>
    <variation>S</variation>
    <location>
        <position position="71"/>
    </location>
</feature>
<feature type="mutagenesis site" description="2 to 3-fold decrease in kcat/Kamine and small decrease in kcat with (R)-6-hydroxynicotine as substrate." evidence="6">
    <original>K</original>
    <variation>M</variation>
    <location>
        <position position="347"/>
    </location>
</feature>
<feature type="mutagenesis site" description="20-fold decrease in kcat/Kamine and 4-fold decrease in kcat with (R)-6-hydroxynicotine as substrate. Large increase in the Kd value for (R)-6-hydroxynicotine." evidence="6">
    <original>E</original>
    <variation>A</variation>
    <location>
        <position position="349"/>
    </location>
</feature>
<feature type="mutagenesis site" description="220-fold decrease in kcat/Kamine and 8-fold decrease in kcat with (R)-6-hydroxynicotine as substrate. Large increase in the Kd value for (R)-6-hydroxynicotine." evidence="6">
    <original>E</original>
    <variation>Q</variation>
    <location>
        <position position="349"/>
    </location>
</feature>
<feature type="mutagenesis site" description="3800-fold decrease in kcat/Kamine and 100-fold decrease in kcat with (R)-6-hydroxynicotine as substrate. Large increase in the Kd value for (R)-6-hydroxynicotine." evidence="6">
    <original>E</original>
    <variation>Q</variation>
    <location>
        <position position="351"/>
    </location>
</feature>
<feature type="strand" evidence="23">
    <location>
        <begin position="12"/>
        <end position="16"/>
    </location>
</feature>
<feature type="strand" evidence="25">
    <location>
        <begin position="20"/>
        <end position="22"/>
    </location>
</feature>
<feature type="helix" evidence="23">
    <location>
        <begin position="23"/>
        <end position="27"/>
    </location>
</feature>
<feature type="strand" evidence="23">
    <location>
        <begin position="39"/>
        <end position="43"/>
    </location>
</feature>
<feature type="helix" evidence="23">
    <location>
        <begin position="47"/>
        <end position="60"/>
    </location>
</feature>
<feature type="strand" evidence="23">
    <location>
        <begin position="64"/>
        <end position="69"/>
    </location>
</feature>
<feature type="strand" evidence="23">
    <location>
        <begin position="80"/>
        <end position="86"/>
    </location>
</feature>
<feature type="strand" evidence="23">
    <location>
        <begin position="93"/>
        <end position="96"/>
    </location>
</feature>
<feature type="turn" evidence="23">
    <location>
        <begin position="97"/>
        <end position="100"/>
    </location>
</feature>
<feature type="strand" evidence="23">
    <location>
        <begin position="101"/>
        <end position="105"/>
    </location>
</feature>
<feature type="helix" evidence="23">
    <location>
        <begin position="110"/>
        <end position="118"/>
    </location>
</feature>
<feature type="turn" evidence="23">
    <location>
        <begin position="119"/>
        <end position="121"/>
    </location>
</feature>
<feature type="strand" evidence="24">
    <location>
        <begin position="128"/>
        <end position="133"/>
    </location>
</feature>
<feature type="helix" evidence="23">
    <location>
        <begin position="134"/>
        <end position="138"/>
    </location>
</feature>
<feature type="helix" evidence="23">
    <location>
        <begin position="147"/>
        <end position="150"/>
    </location>
</feature>
<feature type="helix" evidence="23">
    <location>
        <begin position="153"/>
        <end position="156"/>
    </location>
</feature>
<feature type="strand" evidence="23">
    <location>
        <begin position="157"/>
        <end position="163"/>
    </location>
</feature>
<feature type="strand" evidence="23">
    <location>
        <begin position="169"/>
        <end position="177"/>
    </location>
</feature>
<feature type="helix" evidence="23">
    <location>
        <begin position="178"/>
        <end position="187"/>
    </location>
</feature>
<feature type="helix" evidence="23">
    <location>
        <begin position="188"/>
        <end position="190"/>
    </location>
</feature>
<feature type="strand" evidence="23">
    <location>
        <begin position="193"/>
        <end position="200"/>
    </location>
</feature>
<feature type="strand" evidence="23">
    <location>
        <begin position="208"/>
        <end position="215"/>
    </location>
</feature>
<feature type="helix" evidence="23">
    <location>
        <begin position="219"/>
        <end position="235"/>
    </location>
</feature>
<feature type="turn" evidence="23">
    <location>
        <begin position="236"/>
        <end position="239"/>
    </location>
</feature>
<feature type="strand" evidence="23">
    <location>
        <begin position="243"/>
        <end position="248"/>
    </location>
</feature>
<feature type="strand" evidence="23">
    <location>
        <begin position="254"/>
        <end position="261"/>
    </location>
</feature>
<feature type="helix" evidence="23">
    <location>
        <begin position="266"/>
        <end position="277"/>
    </location>
</feature>
<feature type="strand" evidence="23">
    <location>
        <begin position="283"/>
        <end position="285"/>
    </location>
</feature>
<feature type="strand" evidence="23">
    <location>
        <begin position="288"/>
        <end position="290"/>
    </location>
</feature>
<feature type="helix" evidence="23">
    <location>
        <begin position="292"/>
        <end position="302"/>
    </location>
</feature>
<feature type="strand" evidence="23">
    <location>
        <begin position="310"/>
        <end position="318"/>
    </location>
</feature>
<feature type="helix" evidence="23">
    <location>
        <begin position="322"/>
        <end position="330"/>
    </location>
</feature>
<feature type="helix" evidence="23">
    <location>
        <begin position="331"/>
        <end position="335"/>
    </location>
</feature>
<feature type="strand" evidence="23">
    <location>
        <begin position="337"/>
        <end position="339"/>
    </location>
</feature>
<feature type="turn" evidence="23">
    <location>
        <begin position="340"/>
        <end position="343"/>
    </location>
</feature>
<feature type="strand" evidence="23">
    <location>
        <begin position="344"/>
        <end position="351"/>
    </location>
</feature>
<feature type="strand" evidence="23">
    <location>
        <begin position="370"/>
        <end position="377"/>
    </location>
</feature>
<feature type="strand" evidence="25">
    <location>
        <begin position="379"/>
        <end position="381"/>
    </location>
</feature>
<feature type="turn" evidence="23">
    <location>
        <begin position="382"/>
        <end position="385"/>
    </location>
</feature>
<feature type="helix" evidence="23">
    <location>
        <begin position="386"/>
        <end position="400"/>
    </location>
</feature>
<feature type="strand" evidence="23">
    <location>
        <begin position="404"/>
        <end position="408"/>
    </location>
</feature>
<feature type="helix" evidence="23">
    <location>
        <begin position="411"/>
        <end position="413"/>
    </location>
</feature>
<feature type="helix" evidence="23">
    <location>
        <begin position="419"/>
        <end position="426"/>
    </location>
</feature>
<feature type="helix" evidence="23">
    <location>
        <begin position="428"/>
        <end position="441"/>
    </location>
</feature>
<feature type="strand" evidence="23">
    <location>
        <begin position="449"/>
        <end position="451"/>
    </location>
</feature>
<accession>P08159</accession>
<accession>Q8GAG1</accession>
<geneLocation type="plasmid">
    <name>pAO1</name>
</geneLocation>
<sequence length="458" mass="48786">MSSKLATPLSIQGEVIYPDDSGFDAIANIWDGRHLQRPSLIARCLSAGDVAKSVRYACDNGLEISVRSGGHNPNGYATNDGGIVLDLRLMNSIHIDTAGSRARIGGGVISGDLVKEAAKFGLAAVTGMHPKVGFCGLALNGGVGFLTPKYGLASDNILGATLVTATGDVIYCSDDERPELFWAVRGAGPNFGVVTEVEVQLYELPRKMLAGFITWAPSVSELAGLLTSLLDALNEMADHIYPSVFVGVDENRAPSVTVCVGHLGGLDIAERDIARLRGLGRTVSDSIAVRSYDEVVALNAEVGSFEDGMSNLWIDREIAMPNARFAEAIAGNLDKFVSEPASGGSVKLEIEGMPFGNPKRTPARHRDAMGVLALAEWSGAAPGSEKYPELARELDAALLRAGVTTSGFGLLNNNSEVTAEMVAEVYKPEVYCRLAAVKREYDPENRFRHNYNIDPEGS</sequence>
<comment type="function">
    <text evidence="5 6 8 9 11">Involved in the degradation of D-nicotine (PubMed:4628374, PubMed:5849820). Catalyzes the oxidation of (R)-6-hydroxynicotine (6-hydroxy-D-nicotine) to 6-hydroxypseudooxynicotine (PubMed:2680607, PubMed:31046245, PubMed:4628374, PubMed:4965794, PubMed:5849820). Oxidation of the pyrrolidine ring of (R)-6-hydroxynicotine leads to the formation of the optically inactive 6-hydroxy-N-methylmyosmine, which hydrolyzes spontaneously to 6-hydroxypseudooxynicotine (PubMed:31046245, PubMed:4628374, PubMed:4965794). Acts with absolute stereospecificity on the D-form of 6-hydroxynicotine (PubMed:4628374, PubMed:4965794). Shows lower activity with (R)-6-hydroxynornicotine, and weak activity with (R)-4-(1-methylpyrrolidine-2-yl)phenol, (R)-6-chloronicotine and (R)-nicotine (PubMed:31046245).</text>
</comment>
<comment type="catalytic activity">
    <reaction evidence="5 6 8 9 11">
        <text>(R)-6-hydroxynicotine + O2 + H2O = 6-hydroxypseudooxynicotine + H2O2</text>
        <dbReference type="Rhea" id="RHEA:10012"/>
        <dbReference type="ChEBI" id="CHEBI:15377"/>
        <dbReference type="ChEBI" id="CHEBI:15379"/>
        <dbReference type="ChEBI" id="CHEBI:16240"/>
        <dbReference type="ChEBI" id="CHEBI:58413"/>
        <dbReference type="ChEBI" id="CHEBI:58682"/>
        <dbReference type="EC" id="1.5.3.6"/>
    </reaction>
    <physiologicalReaction direction="left-to-right" evidence="5 6 8 9 11">
        <dbReference type="Rhea" id="RHEA:10013"/>
    </physiologicalReaction>
</comment>
<comment type="catalytic activity">
    <reaction evidence="6 16 17">
        <text>(R)-6-hydroxynicotine + O2 = 6-hydroxy-N-methylmyosmine + H2O2</text>
        <dbReference type="Rhea" id="RHEA:46988"/>
        <dbReference type="ChEBI" id="CHEBI:15379"/>
        <dbReference type="ChEBI" id="CHEBI:16240"/>
        <dbReference type="ChEBI" id="CHEBI:58413"/>
        <dbReference type="ChEBI" id="CHEBI:87164"/>
    </reaction>
    <physiologicalReaction direction="left-to-right" evidence="6 16 17">
        <dbReference type="Rhea" id="RHEA:46989"/>
    </physiologicalReaction>
</comment>
<comment type="cofactor">
    <cofactor evidence="3 4 5 8 10">
        <name>FAD</name>
        <dbReference type="ChEBI" id="CHEBI:57692"/>
    </cofactor>
    <text evidence="3 4 5 8 10">Binds 1 FAD per subunit (PubMed:16095622, PubMed:4628374). The FAD is covalently bound to the protein (PubMed:16095622, PubMed:2115879, PubMed:2680607, PubMed:4628374, PubMed:5083098).</text>
</comment>
<comment type="activity regulation">
    <text evidence="8 9 11">Inhibited by (S)-6-hydroxynicotine (PubMed:4628374, PubMed:4965794, PubMed:5849820). Inhibited by high concentrations of phenanthroline (PubMed:4628374).</text>
</comment>
<comment type="biophysicochemical properties">
    <kinetics>
        <KM evidence="11">0.1 mM for (R)-6-hydroxynicotine</KM>
        <KM evidence="8">0.05 mM for (R)-6-hydroxynicotine</KM>
    </kinetics>
    <phDependence>
        <text evidence="8">Fairly stable at neutral or alkaline pH.</text>
    </phDependence>
    <temperatureDependence>
        <text evidence="8">Inactivated at temperatures above 45 degrees Celsius.</text>
    </temperatureDependence>
</comment>
<comment type="pathway">
    <text evidence="18">Alkaloid degradation; nicotine degradation; 6-hydroxypseudooxynicotine from nicotine (R-isomer route): step 2/2.</text>
</comment>
<comment type="subunit">
    <text evidence="3 8">Monomer.</text>
</comment>
<comment type="subcellular location">
    <subcellularLocation>
        <location evidence="7">Cytoplasm</location>
    </subcellularLocation>
</comment>
<comment type="induction">
    <text evidence="2 7 11">Repressed by the HTH-type transcriptional repressor HdnoR (PubMed:14534317). Induced in the presence of D-nicotine, 6-hydroxy-D-nicotine and 6-hydroxy-L-nicotine (PubMed:14534317, PubMed:5849820). Also induced, at a lower level, in the presence of L-nicotine (PubMed:14534317). Expressed during stationary phase (PubMed:4019415).</text>
</comment>
<comment type="similarity">
    <text evidence="15">Belongs to the oxygen-dependent FAD-linked oxidoreductase family.</text>
</comment>
<comment type="sequence caution" evidence="15">
    <conflict type="erroneous initiation">
        <sequence resource="EMBL-CDS" id="CAD47970"/>
    </conflict>
    <text>Extended N-terminus.</text>
</comment>
<evidence type="ECO:0000255" key="1">
    <source>
        <dbReference type="PROSITE-ProRule" id="PRU00718"/>
    </source>
</evidence>
<evidence type="ECO:0000269" key="2">
    <source>
    </source>
</evidence>
<evidence type="ECO:0000269" key="3">
    <source>
    </source>
</evidence>
<evidence type="ECO:0000269" key="4">
    <source>
    </source>
</evidence>
<evidence type="ECO:0000269" key="5">
    <source>
    </source>
</evidence>
<evidence type="ECO:0000269" key="6">
    <source>
    </source>
</evidence>
<evidence type="ECO:0000269" key="7">
    <source>
    </source>
</evidence>
<evidence type="ECO:0000269" key="8">
    <source>
    </source>
</evidence>
<evidence type="ECO:0000269" key="9">
    <source>
    </source>
</evidence>
<evidence type="ECO:0000269" key="10">
    <source>
    </source>
</evidence>
<evidence type="ECO:0000269" key="11">
    <source>
    </source>
</evidence>
<evidence type="ECO:0000303" key="12">
    <source>
    </source>
</evidence>
<evidence type="ECO:0000303" key="13">
    <source>
    </source>
</evidence>
<evidence type="ECO:0000303" key="14">
    <source>
    </source>
</evidence>
<evidence type="ECO:0000305" key="15"/>
<evidence type="ECO:0000305" key="16">
    <source>
    </source>
</evidence>
<evidence type="ECO:0000305" key="17">
    <source>
    </source>
</evidence>
<evidence type="ECO:0000305" key="18">
    <source>
    </source>
</evidence>
<evidence type="ECO:0000312" key="19">
    <source>
        <dbReference type="EMBL" id="CAD47970.1"/>
    </source>
</evidence>
<evidence type="ECO:0007744" key="20">
    <source>
        <dbReference type="PDB" id="2BVF"/>
    </source>
</evidence>
<evidence type="ECO:0007744" key="21">
    <source>
        <dbReference type="PDB" id="2BVG"/>
    </source>
</evidence>
<evidence type="ECO:0007744" key="22">
    <source>
        <dbReference type="PDB" id="2BVH"/>
    </source>
</evidence>
<evidence type="ECO:0007829" key="23">
    <source>
        <dbReference type="PDB" id="2BVF"/>
    </source>
</evidence>
<evidence type="ECO:0007829" key="24">
    <source>
        <dbReference type="PDB" id="2BVG"/>
    </source>
</evidence>
<evidence type="ECO:0007829" key="25">
    <source>
        <dbReference type="PDB" id="2BVH"/>
    </source>
</evidence>
<dbReference type="EC" id="1.5.3.6" evidence="5 6 8 9 11"/>
<dbReference type="EMBL" id="X05999">
    <property type="protein sequence ID" value="CAA29416.1"/>
    <property type="molecule type" value="Genomic_DNA"/>
</dbReference>
<dbReference type="EMBL" id="AJ507836">
    <property type="protein sequence ID" value="CAD47970.1"/>
    <property type="status" value="ALT_INIT"/>
    <property type="molecule type" value="Genomic_DNA"/>
</dbReference>
<dbReference type="PIR" id="S00087">
    <property type="entry name" value="DEIQHN"/>
</dbReference>
<dbReference type="RefSeq" id="WP_181968447.1">
    <property type="nucleotide sequence ID" value="NZ_BMRR01000008.1"/>
</dbReference>
<dbReference type="RefSeq" id="YP_007988796.1">
    <property type="nucleotide sequence ID" value="NC_021229.1"/>
</dbReference>
<dbReference type="PDB" id="2BVF">
    <property type="method" value="X-ray"/>
    <property type="resolution" value="1.92 A"/>
    <property type="chains" value="A/B=1-458"/>
</dbReference>
<dbReference type="PDB" id="2BVG">
    <property type="method" value="X-ray"/>
    <property type="resolution" value="3.18 A"/>
    <property type="chains" value="A/B/C/D=1-458"/>
</dbReference>
<dbReference type="PDB" id="2BVH">
    <property type="method" value="X-ray"/>
    <property type="resolution" value="2.90 A"/>
    <property type="chains" value="A/B/C/D=1-458"/>
</dbReference>
<dbReference type="PDBsum" id="2BVF"/>
<dbReference type="PDBsum" id="2BVG"/>
<dbReference type="PDBsum" id="2BVH"/>
<dbReference type="SMR" id="P08159"/>
<dbReference type="GeneID" id="84020312"/>
<dbReference type="STRENDA-DB" id="EVXB7U">
    <property type="experiment" value="Steady-state kinetic parameters for E350A D-hydroxynicotine oxidase"/>
</dbReference>
<dbReference type="STRENDA-DB" id="HVZHMC">
    <property type="experiment" value="Steady-state kinetic parameters for E352Q D-hydroxynicotine oxidase"/>
</dbReference>
<dbReference type="STRENDA-DB" id="VYHYEG">
    <property type="experiment" value="Steady-state kinetic parameters for wild type D-hydroxynicotine oxidase"/>
</dbReference>
<dbReference type="STRENDA-DB" id="WDYBCA">
    <property type="experiment" value="Steady-state kinetic parameters for K348M D-hydroxynicotine oxidase"/>
</dbReference>
<dbReference type="STRENDA-DB" id="WQ6QO7">
    <property type="experiment" value="Steady-state kinetic parameters for E350Q D-hydroxynicotine oxidase"/>
</dbReference>
<dbReference type="UniPathway" id="UPA00106">
    <property type="reaction ID" value="UER00488"/>
</dbReference>
<dbReference type="EvolutionaryTrace" id="P08159"/>
<dbReference type="GO" id="GO:0005737">
    <property type="term" value="C:cytoplasm"/>
    <property type="evidence" value="ECO:0007669"/>
    <property type="project" value="UniProtKB-SubCell"/>
</dbReference>
<dbReference type="GO" id="GO:0018530">
    <property type="term" value="F:(R)-6-hydroxynicotine oxidase activity"/>
    <property type="evidence" value="ECO:0007669"/>
    <property type="project" value="UniProtKB-EC"/>
</dbReference>
<dbReference type="GO" id="GO:0071949">
    <property type="term" value="F:FAD binding"/>
    <property type="evidence" value="ECO:0007669"/>
    <property type="project" value="InterPro"/>
</dbReference>
<dbReference type="GO" id="GO:0009820">
    <property type="term" value="P:alkaloid metabolic process"/>
    <property type="evidence" value="ECO:0007669"/>
    <property type="project" value="UniProtKB-KW"/>
</dbReference>
<dbReference type="GO" id="GO:0019608">
    <property type="term" value="P:nicotine catabolic process"/>
    <property type="evidence" value="ECO:0007669"/>
    <property type="project" value="UniProtKB-UniPathway"/>
</dbReference>
<dbReference type="Gene3D" id="3.30.465.10">
    <property type="match status" value="1"/>
</dbReference>
<dbReference type="Gene3D" id="3.40.462.20">
    <property type="match status" value="1"/>
</dbReference>
<dbReference type="Gene3D" id="3.30.43.10">
    <property type="entry name" value="Uridine Diphospho-n-acetylenolpyruvylglucosamine Reductase, domain 2"/>
    <property type="match status" value="1"/>
</dbReference>
<dbReference type="InterPro" id="IPR012951">
    <property type="entry name" value="BBE"/>
</dbReference>
<dbReference type="InterPro" id="IPR016166">
    <property type="entry name" value="FAD-bd_PCMH"/>
</dbReference>
<dbReference type="InterPro" id="IPR036318">
    <property type="entry name" value="FAD-bd_PCMH-like_sf"/>
</dbReference>
<dbReference type="InterPro" id="IPR016167">
    <property type="entry name" value="FAD-bd_PCMH_sub1"/>
</dbReference>
<dbReference type="InterPro" id="IPR016169">
    <property type="entry name" value="FAD-bd_PCMH_sub2"/>
</dbReference>
<dbReference type="InterPro" id="IPR016164">
    <property type="entry name" value="FAD-linked_Oxase-like_C"/>
</dbReference>
<dbReference type="InterPro" id="IPR050416">
    <property type="entry name" value="FAD-linked_Oxidoreductase"/>
</dbReference>
<dbReference type="InterPro" id="IPR006094">
    <property type="entry name" value="Oxid_FAD_bind_N"/>
</dbReference>
<dbReference type="InterPro" id="IPR006093">
    <property type="entry name" value="Oxy_OxRdtase_FAD_BS"/>
</dbReference>
<dbReference type="PANTHER" id="PTHR42973">
    <property type="entry name" value="BINDING OXIDOREDUCTASE, PUTATIVE (AFU_ORTHOLOGUE AFUA_1G17690)-RELATED"/>
    <property type="match status" value="1"/>
</dbReference>
<dbReference type="PANTHER" id="PTHR42973:SF39">
    <property type="entry name" value="FAD-BINDING PCMH-TYPE DOMAIN-CONTAINING PROTEIN"/>
    <property type="match status" value="1"/>
</dbReference>
<dbReference type="Pfam" id="PF08031">
    <property type="entry name" value="BBE"/>
    <property type="match status" value="1"/>
</dbReference>
<dbReference type="Pfam" id="PF01565">
    <property type="entry name" value="FAD_binding_4"/>
    <property type="match status" value="1"/>
</dbReference>
<dbReference type="SUPFAM" id="SSF56176">
    <property type="entry name" value="FAD-binding/transporter-associated domain-like"/>
    <property type="match status" value="1"/>
</dbReference>
<dbReference type="SUPFAM" id="SSF55103">
    <property type="entry name" value="FAD-linked oxidases, C-terminal domain"/>
    <property type="match status" value="1"/>
</dbReference>
<dbReference type="PROSITE" id="PS51387">
    <property type="entry name" value="FAD_PCMH"/>
    <property type="match status" value="1"/>
</dbReference>
<dbReference type="PROSITE" id="PS00862">
    <property type="entry name" value="OX2_COVAL_FAD"/>
    <property type="match status" value="1"/>
</dbReference>